<gene>
    <name type="primary">US20</name>
</gene>
<feature type="chain" id="PRO_0000418322" description="Membrane protein US20">
    <location>
        <begin position="1"/>
        <end position="254"/>
    </location>
</feature>
<feature type="transmembrane region" description="Helical" evidence="1">
    <location>
        <begin position="31"/>
        <end position="51"/>
    </location>
</feature>
<feature type="transmembrane region" description="Helical" evidence="1">
    <location>
        <begin position="62"/>
        <end position="82"/>
    </location>
</feature>
<feature type="transmembrane region" description="Helical" evidence="1">
    <location>
        <begin position="89"/>
        <end position="109"/>
    </location>
</feature>
<feature type="transmembrane region" description="Helical" evidence="1">
    <location>
        <begin position="114"/>
        <end position="134"/>
    </location>
</feature>
<feature type="transmembrane region" description="Helical" evidence="1">
    <location>
        <begin position="143"/>
        <end position="163"/>
    </location>
</feature>
<feature type="transmembrane region" description="Helical" evidence="1">
    <location>
        <begin position="178"/>
        <end position="198"/>
    </location>
</feature>
<feature type="transmembrane region" description="Helical" evidence="1">
    <location>
        <begin position="208"/>
        <end position="228"/>
    </location>
</feature>
<comment type="subcellular location">
    <subcellularLocation>
        <location evidence="2">Host membrane</location>
        <topology evidence="2">Multi-pass membrane protein</topology>
    </subcellularLocation>
</comment>
<accession>F5HGH8</accession>
<organismHost>
    <name type="scientific">Homo sapiens</name>
    <name type="common">Human</name>
    <dbReference type="NCBI Taxonomy" id="9606"/>
</organismHost>
<sequence length="254" mass="28531">MQAQEANALLLSRMEALEWFKKFTVWLRVYAIFIFQLAFSFGLGSVFWLGFPQNRNFCVENYSFFLTVLVPIVCMFITYTLGNEHPSNATVLFIYLLANSLTAAIFQMCSESRVLVGSYVMTLALFISFTGLAFLGGRDRRRWKCISCVYVVMLLSFLTLALLSDADWLQKIVVTLCAFSISFFLGILAYDSLMVIFFCPPNQCIRHAVCLYLDSMAIFLTLLLMLSGPRWISLSDGAPLDNGTLTAASTTGKS</sequence>
<evidence type="ECO:0000255" key="1"/>
<evidence type="ECO:0000305" key="2"/>
<protein>
    <recommendedName>
        <fullName>Membrane protein US20</fullName>
    </recommendedName>
</protein>
<name>US20_HCMVM</name>
<dbReference type="EMBL" id="AY446894">
    <property type="protein sequence ID" value="AAR31709.1"/>
    <property type="molecule type" value="Genomic_DNA"/>
</dbReference>
<dbReference type="RefSeq" id="YP_081605.1">
    <property type="nucleotide sequence ID" value="NC_006273.2"/>
</dbReference>
<dbReference type="SMR" id="F5HGH8"/>
<dbReference type="DNASU" id="3077561"/>
<dbReference type="GeneID" id="3077561"/>
<dbReference type="KEGG" id="vg:3077561"/>
<dbReference type="Reactome" id="R-HSA-9609690">
    <property type="pathway name" value="HCMV Early Events"/>
</dbReference>
<dbReference type="Proteomes" id="UP000000938">
    <property type="component" value="Segment"/>
</dbReference>
<dbReference type="GO" id="GO:0033644">
    <property type="term" value="C:host cell membrane"/>
    <property type="evidence" value="ECO:0007669"/>
    <property type="project" value="UniProtKB-SubCell"/>
</dbReference>
<dbReference type="GO" id="GO:0016020">
    <property type="term" value="C:membrane"/>
    <property type="evidence" value="ECO:0007669"/>
    <property type="project" value="UniProtKB-KW"/>
</dbReference>
<dbReference type="InterPro" id="IPR006214">
    <property type="entry name" value="Bax_inhibitor_1-related"/>
</dbReference>
<dbReference type="Pfam" id="PF01027">
    <property type="entry name" value="Bax1-I"/>
    <property type="match status" value="1"/>
</dbReference>
<keyword id="KW-1043">Host membrane</keyword>
<keyword id="KW-0472">Membrane</keyword>
<keyword id="KW-1185">Reference proteome</keyword>
<keyword id="KW-0812">Transmembrane</keyword>
<keyword id="KW-1133">Transmembrane helix</keyword>
<organism>
    <name type="scientific">Human cytomegalovirus (strain Merlin)</name>
    <name type="common">HHV-5</name>
    <name type="synonym">Human herpesvirus 5</name>
    <dbReference type="NCBI Taxonomy" id="295027"/>
    <lineage>
        <taxon>Viruses</taxon>
        <taxon>Duplodnaviria</taxon>
        <taxon>Heunggongvirae</taxon>
        <taxon>Peploviricota</taxon>
        <taxon>Herviviricetes</taxon>
        <taxon>Herpesvirales</taxon>
        <taxon>Orthoherpesviridae</taxon>
        <taxon>Betaherpesvirinae</taxon>
        <taxon>Cytomegalovirus</taxon>
        <taxon>Cytomegalovirus humanbeta5</taxon>
        <taxon>Human cytomegalovirus</taxon>
    </lineage>
</organism>
<reference key="1">
    <citation type="journal article" date="2004" name="J. Gen. Virol.">
        <title>Genetic content of wild-type human cytomegalovirus.</title>
        <authorList>
            <person name="Dolan A."/>
            <person name="Cunningham C."/>
            <person name="Hector R.D."/>
            <person name="Hassan-Walker A.F."/>
            <person name="Lee L."/>
            <person name="Addison C."/>
            <person name="Dargan D.J."/>
            <person name="McGeoch D.J."/>
            <person name="Gatherer D."/>
            <person name="Emery V.C."/>
            <person name="Griffiths P.D."/>
            <person name="Sinzger C."/>
            <person name="McSharry B.P."/>
            <person name="Wilkinson G.W.G."/>
            <person name="Davison A.J."/>
        </authorList>
    </citation>
    <scope>NUCLEOTIDE SEQUENCE [LARGE SCALE GENOMIC DNA]</scope>
</reference>
<proteinExistence type="predicted"/>